<keyword id="KW-0460">Magnesium</keyword>
<keyword id="KW-0479">Metal-binding</keyword>
<keyword id="KW-0489">Methyltransferase</keyword>
<keyword id="KW-1185">Reference proteome</keyword>
<keyword id="KW-0808">Transferase</keyword>
<proteinExistence type="inferred from homology"/>
<name>BTS3_THECC</name>
<organism>
    <name type="scientific">Theobroma cacao</name>
    <name type="common">Cacao</name>
    <name type="synonym">Cocoa</name>
    <dbReference type="NCBI Taxonomy" id="3641"/>
    <lineage>
        <taxon>Eukaryota</taxon>
        <taxon>Viridiplantae</taxon>
        <taxon>Streptophyta</taxon>
        <taxon>Embryophyta</taxon>
        <taxon>Tracheophyta</taxon>
        <taxon>Spermatophyta</taxon>
        <taxon>Magnoliopsida</taxon>
        <taxon>eudicotyledons</taxon>
        <taxon>Gunneridae</taxon>
        <taxon>Pentapetalae</taxon>
        <taxon>rosids</taxon>
        <taxon>malvids</taxon>
        <taxon>Malvales</taxon>
        <taxon>Malvaceae</taxon>
        <taxon>Byttnerioideae</taxon>
        <taxon>Theobroma</taxon>
    </lineage>
</organism>
<dbReference type="EC" id="2.1.1.159" evidence="1"/>
<dbReference type="EMBL" id="CM001888">
    <property type="protein sequence ID" value="EOY17879.1"/>
    <property type="status" value="ALT_SEQ"/>
    <property type="molecule type" value="Genomic_DNA"/>
</dbReference>
<dbReference type="SMR" id="A0A061FTC2"/>
<dbReference type="STRING" id="3641.A0A061FTC2"/>
<dbReference type="eggNOG" id="ENOG502QQVK">
    <property type="taxonomic scope" value="Eukaryota"/>
</dbReference>
<dbReference type="HOGENOM" id="CLU_019628_7_0_1"/>
<dbReference type="InParanoid" id="A0A061FTC2"/>
<dbReference type="Proteomes" id="UP000026915">
    <property type="component" value="Chromosome 10"/>
</dbReference>
<dbReference type="Proteomes" id="UP000694886">
    <property type="component" value="Unplaced"/>
</dbReference>
<dbReference type="GO" id="GO:0046872">
    <property type="term" value="F:metal ion binding"/>
    <property type="evidence" value="ECO:0007669"/>
    <property type="project" value="UniProtKB-KW"/>
</dbReference>
<dbReference type="GO" id="GO:0008757">
    <property type="term" value="F:S-adenosylmethionine-dependent methyltransferase activity"/>
    <property type="evidence" value="ECO:0000318"/>
    <property type="project" value="GO_Central"/>
</dbReference>
<dbReference type="GO" id="GO:0032259">
    <property type="term" value="P:methylation"/>
    <property type="evidence" value="ECO:0000318"/>
    <property type="project" value="GO_Central"/>
</dbReference>
<dbReference type="Gene3D" id="1.10.1200.270">
    <property type="entry name" value="Methyltransferase, alpha-helical capping domain"/>
    <property type="match status" value="1"/>
</dbReference>
<dbReference type="Gene3D" id="3.40.50.150">
    <property type="entry name" value="Vaccinia Virus protein VP39"/>
    <property type="match status" value="1"/>
</dbReference>
<dbReference type="InterPro" id="IPR005299">
    <property type="entry name" value="MeTrfase_7"/>
</dbReference>
<dbReference type="InterPro" id="IPR042086">
    <property type="entry name" value="MeTrfase_capping"/>
</dbReference>
<dbReference type="InterPro" id="IPR029063">
    <property type="entry name" value="SAM-dependent_MTases_sf"/>
</dbReference>
<dbReference type="PANTHER" id="PTHR31009">
    <property type="entry name" value="S-ADENOSYL-L-METHIONINE:CARBOXYL METHYLTRANSFERASE FAMILY PROTEIN"/>
    <property type="match status" value="1"/>
</dbReference>
<dbReference type="Pfam" id="PF03492">
    <property type="entry name" value="Methyltransf_7"/>
    <property type="match status" value="1"/>
</dbReference>
<dbReference type="SUPFAM" id="SSF53335">
    <property type="entry name" value="S-adenosyl-L-methionine-dependent methyltransferases"/>
    <property type="match status" value="1"/>
</dbReference>
<accession>A0A061FTC2</accession>
<sequence length="365" mass="40665">MEVKDIVFMNKGDGENSYVKSAGLTLKVIAKTQPMVQKAVQSLFKGTHSAPLQVVNVADLGCALGPQPLESMSIVIESIVEKCGELGCEMPEIQFHLNDLAGNDFNTLFKGLSVVQEKYKNVSWFAMGAPGSFHGRLFPRNSMHLVHSCYSVHWLSKAPKITSEEGLPLNKGKIYMSKTSPPAVKEAYLSQFEEDFSSVLRFRSPELAPDGRMVLILNGRQSADPTEKDICYLRDLLAEALSYLVSEGLIDEEKLGSFNVPYYNPSQEEVERVIDKEGSFTTEFSDTVVLEIGGKNAWSDPGLRIKGYRCFSEPVLSHQFGEEVMDKLFDKAEEILAEDYKQGKEATKNISIVVVLKKKTNQTWT</sequence>
<reference key="1">
    <citation type="journal article" date="2013" name="Genome Biol.">
        <title>The genome sequence of the most widely cultivated cacao type and its use to identify candidate genes regulating pod color.</title>
        <authorList>
            <person name="Motamayor J.C."/>
            <person name="Mockaitis K."/>
            <person name="Schmutz J."/>
            <person name="Haiminen N."/>
            <person name="Livingstone D. III"/>
            <person name="Cornejo O."/>
            <person name="Findley S.D."/>
            <person name="Zheng P."/>
            <person name="Utro F."/>
            <person name="Royaert S."/>
            <person name="Saski C."/>
            <person name="Jenkins J."/>
            <person name="Podicheti R."/>
            <person name="Zhao M."/>
            <person name="Scheffler B.E."/>
            <person name="Stack J.C."/>
            <person name="Feltus F.A."/>
            <person name="Mustiga G.M."/>
            <person name="Amores F."/>
            <person name="Phillips W."/>
            <person name="Marelli J.P."/>
            <person name="May G.D."/>
            <person name="Shapiro H."/>
            <person name="Ma J."/>
            <person name="Bustamante C.D."/>
            <person name="Schnell R.J."/>
            <person name="Main D."/>
            <person name="Gilbert D."/>
            <person name="Parida L."/>
            <person name="Kuhn D.N."/>
        </authorList>
    </citation>
    <scope>NUCLEOTIDE SEQUENCE [LARGE SCALE GENOMIC DNA]</scope>
    <source>
        <strain>cv. Matina 1-6</strain>
    </source>
</reference>
<reference key="2">
    <citation type="journal article" date="2008" name="Phytochemistry">
        <title>Caffeine and related purine alkaloids: biosynthesis, catabolism, function and genetic engineering.</title>
        <authorList>
            <person name="Ashihara H."/>
            <person name="Sano H."/>
            <person name="Crozier A."/>
        </authorList>
    </citation>
    <scope>REVIEW ON CAFFEINE BIOSYNTHESIS</scope>
</reference>
<evidence type="ECO:0000250" key="1">
    <source>
        <dbReference type="UniProtKB" id="A0A061FMF5"/>
    </source>
</evidence>
<evidence type="ECO:0000250" key="2">
    <source>
        <dbReference type="UniProtKB" id="A0A6C0WW36"/>
    </source>
</evidence>
<evidence type="ECO:0000250" key="3">
    <source>
        <dbReference type="UniProtKB" id="Q2HXI6"/>
    </source>
</evidence>
<evidence type="ECO:0000250" key="4">
    <source>
        <dbReference type="UniProtKB" id="Q9FLN8"/>
    </source>
</evidence>
<evidence type="ECO:0000250" key="5">
    <source>
        <dbReference type="UniProtKB" id="Q9FZN8"/>
    </source>
</evidence>
<evidence type="ECO:0000305" key="6"/>
<evidence type="ECO:0000312" key="7">
    <source>
        <dbReference type="EMBL" id="EOY17879.1"/>
    </source>
</evidence>
<protein>
    <recommendedName>
        <fullName evidence="6">Probable 7-methylxanthine methyltransferase 3</fullName>
        <ecNumber evidence="1">2.1.1.159</ecNumber>
    </recommendedName>
    <alternativeName>
        <fullName evidence="6">Theobromine synthase TCM_042584</fullName>
    </alternativeName>
</protein>
<gene>
    <name evidence="7" type="ORF">TCM_042584</name>
</gene>
<feature type="chain" id="PRO_0000451785" description="Probable 7-methylxanthine methyltransferase 3">
    <location>
        <begin position="1"/>
        <end position="365"/>
    </location>
</feature>
<feature type="binding site" evidence="2">
    <location>
        <position position="18"/>
    </location>
    <ligand>
        <name>S-adenosyl-L-homocysteine</name>
        <dbReference type="ChEBI" id="CHEBI:57856"/>
    </ligand>
</feature>
<feature type="binding site" evidence="2">
    <location>
        <position position="25"/>
    </location>
    <ligand>
        <name>theobromine</name>
        <dbReference type="ChEBI" id="CHEBI:28946"/>
    </ligand>
</feature>
<feature type="binding site" evidence="2">
    <location>
        <position position="62"/>
    </location>
    <ligand>
        <name>S-adenosyl-L-homocysteine</name>
        <dbReference type="ChEBI" id="CHEBI:57856"/>
    </ligand>
</feature>
<feature type="binding site" evidence="2">
    <location>
        <position position="67"/>
    </location>
    <ligand>
        <name>S-adenosyl-L-homocysteine</name>
        <dbReference type="ChEBI" id="CHEBI:57856"/>
    </ligand>
</feature>
<feature type="binding site" evidence="2">
    <location>
        <position position="99"/>
    </location>
    <ligand>
        <name>S-adenosyl-L-homocysteine</name>
        <dbReference type="ChEBI" id="CHEBI:57856"/>
    </ligand>
</feature>
<feature type="binding site" evidence="2">
    <location>
        <position position="100"/>
    </location>
    <ligand>
        <name>S-adenosyl-L-homocysteine</name>
        <dbReference type="ChEBI" id="CHEBI:57856"/>
    </ligand>
</feature>
<feature type="binding site" evidence="2">
    <location>
        <position position="132"/>
    </location>
    <ligand>
        <name>S-adenosyl-L-homocysteine</name>
        <dbReference type="ChEBI" id="CHEBI:57856"/>
    </ligand>
</feature>
<feature type="binding site" evidence="2">
    <location>
        <position position="133"/>
    </location>
    <ligand>
        <name>S-adenosyl-L-homocysteine</name>
        <dbReference type="ChEBI" id="CHEBI:57856"/>
    </ligand>
</feature>
<feature type="binding site" evidence="2">
    <location>
        <position position="150"/>
    </location>
    <ligand>
        <name>theobromine</name>
        <dbReference type="ChEBI" id="CHEBI:28946"/>
    </ligand>
</feature>
<feature type="binding site" evidence="2">
    <location>
        <position position="153"/>
    </location>
    <ligand>
        <name>theobromine</name>
        <dbReference type="ChEBI" id="CHEBI:28946"/>
    </ligand>
</feature>
<feature type="binding site" evidence="2">
    <location>
        <position position="154"/>
    </location>
    <ligand>
        <name>theobromine</name>
        <dbReference type="ChEBI" id="CHEBI:28946"/>
    </ligand>
</feature>
<feature type="binding site" evidence="4">
    <location>
        <position position="170"/>
    </location>
    <ligand>
        <name>Mg(2+)</name>
        <dbReference type="ChEBI" id="CHEBI:18420"/>
    </ligand>
</feature>
<feature type="binding site" evidence="4">
    <location>
        <position position="258"/>
    </location>
    <ligand>
        <name>Mg(2+)</name>
        <dbReference type="ChEBI" id="CHEBI:18420"/>
    </ligand>
</feature>
<feature type="binding site" evidence="4">
    <location>
        <position position="259"/>
    </location>
    <ligand>
        <name>Mg(2+)</name>
        <dbReference type="ChEBI" id="CHEBI:18420"/>
    </ligand>
</feature>
<feature type="binding site" evidence="2">
    <location>
        <position position="311"/>
    </location>
    <ligand>
        <name>theobromine</name>
        <dbReference type="ChEBI" id="CHEBI:28946"/>
    </ligand>
</feature>
<feature type="site" description="Involved in substrate discrimination" evidence="5">
    <location>
        <position position="147"/>
    </location>
</feature>
<feature type="site" description="Involved in substrate discrimination" evidence="3">
    <location>
        <position position="218"/>
    </location>
</feature>
<feature type="site" description="Involved in substrate discrimination" evidence="5">
    <location>
        <position position="262"/>
    </location>
</feature>
<feature type="site" description="Involved in substrate discrimination" evidence="5">
    <location>
        <position position="322"/>
    </location>
</feature>
<comment type="function">
    <text evidence="1">Involved in the biosynthesis of theobromine.</text>
</comment>
<comment type="catalytic activity">
    <reaction evidence="1">
        <text>7-methylxanthine + S-adenosyl-L-methionine = theobromine + S-adenosyl-L-homocysteine + H(+)</text>
        <dbReference type="Rhea" id="RHEA:24604"/>
        <dbReference type="ChEBI" id="CHEBI:15378"/>
        <dbReference type="ChEBI" id="CHEBI:28946"/>
        <dbReference type="ChEBI" id="CHEBI:48991"/>
        <dbReference type="ChEBI" id="CHEBI:57856"/>
        <dbReference type="ChEBI" id="CHEBI:59789"/>
        <dbReference type="EC" id="2.1.1.159"/>
    </reaction>
    <physiologicalReaction direction="left-to-right" evidence="1">
        <dbReference type="Rhea" id="RHEA:24605"/>
    </physiologicalReaction>
</comment>
<comment type="cofactor">
    <cofactor evidence="4">
        <name>Mg(2+)</name>
        <dbReference type="ChEBI" id="CHEBI:18420"/>
    </cofactor>
    <text evidence="4">Binds 1 Mg(2+) ion per subunit.</text>
</comment>
<comment type="pathway">
    <text evidence="1">Alkaloid biosynthesis.</text>
</comment>
<comment type="similarity">
    <text evidence="6">Belongs to the methyltransferase superfamily. Type-7 methyltransferase family.</text>
</comment>
<comment type="sequence caution" evidence="6">
    <conflict type="erroneous gene model prediction">
        <sequence resource="EMBL-CDS" id="EOY17879"/>
    </conflict>
</comment>